<organism>
    <name type="scientific">Mus musculus</name>
    <name type="common">Mouse</name>
    <dbReference type="NCBI Taxonomy" id="10090"/>
    <lineage>
        <taxon>Eukaryota</taxon>
        <taxon>Metazoa</taxon>
        <taxon>Chordata</taxon>
        <taxon>Craniata</taxon>
        <taxon>Vertebrata</taxon>
        <taxon>Euteleostomi</taxon>
        <taxon>Mammalia</taxon>
        <taxon>Eutheria</taxon>
        <taxon>Euarchontoglires</taxon>
        <taxon>Glires</taxon>
        <taxon>Rodentia</taxon>
        <taxon>Myomorpha</taxon>
        <taxon>Muroidea</taxon>
        <taxon>Muridae</taxon>
        <taxon>Murinae</taxon>
        <taxon>Mus</taxon>
        <taxon>Mus</taxon>
    </lineage>
</organism>
<proteinExistence type="inferred from homology"/>
<feature type="signal peptide">
    <location>
        <begin position="1"/>
        <end position="31"/>
    </location>
</feature>
<feature type="chain" id="PRO_0000019001" description="H-2 class II histocompatibility antigen, E-D beta chain">
    <location>
        <begin position="32"/>
        <end position="264"/>
    </location>
</feature>
<feature type="topological domain" description="Extracellular" evidence="1">
    <location>
        <begin position="32"/>
        <end position="225"/>
    </location>
</feature>
<feature type="transmembrane region" description="Helical" evidence="1">
    <location>
        <begin position="226"/>
        <end position="248"/>
    </location>
</feature>
<feature type="topological domain" description="Cytoplasmic" evidence="1">
    <location>
        <begin position="249"/>
        <end position="264"/>
    </location>
</feature>
<feature type="domain" description="Ig-like C1-type">
    <location>
        <begin position="124"/>
        <end position="214"/>
    </location>
</feature>
<feature type="region of interest" description="Beta-1">
    <location>
        <begin position="32"/>
        <end position="121"/>
    </location>
</feature>
<feature type="region of interest" description="Beta-2">
    <location>
        <begin position="122"/>
        <end position="215"/>
    </location>
</feature>
<feature type="region of interest" description="Connecting peptide">
    <location>
        <begin position="216"/>
        <end position="225"/>
    </location>
</feature>
<feature type="glycosylation site" description="N-linked (GlcNAc...) asparagine" evidence="1">
    <location>
        <position position="46"/>
    </location>
</feature>
<feature type="disulfide bond" evidence="2">
    <location>
        <begin position="42"/>
        <end position="106"/>
    </location>
</feature>
<feature type="disulfide bond" evidence="2">
    <location>
        <begin position="144"/>
        <end position="200"/>
    </location>
</feature>
<comment type="subcellular location">
    <subcellularLocation>
        <location evidence="3">Membrane</location>
        <topology evidence="3">Single-pass type I membrane protein</topology>
    </subcellularLocation>
</comment>
<comment type="miscellaneous">
    <text>The structure of the E beta gene is more similar to class I MHC genes than to class II, in that, unlike either the E alpha or DR alpha genes, (1) the core portion of the E beta cytoplasmic segment is encoded by its own exon and (2) the sixth exon of the E beta chain is not split into two exons, but rather encodes both the carboxyl end of the cytoplasmic segment and the entire 3'-UTR.</text>
</comment>
<comment type="similarity">
    <text evidence="3">Belongs to the MHC class II family.</text>
</comment>
<evidence type="ECO:0000255" key="1"/>
<evidence type="ECO:0000255" key="2">
    <source>
        <dbReference type="PROSITE-ProRule" id="PRU00114"/>
    </source>
</evidence>
<evidence type="ECO:0000305" key="3"/>
<sequence length="264" mass="30049">MVWLPRVPCVAAVILLLTVLSPPVALVRDTRPRFLEYVTSECHFYNGTQHVRFLERFIYNREENLRFDSDVGEYRAVTELGRPDAENWNSQPEILEDARASVDTYCRHNYEISDKFLVRRRVEPTVTVYPTKTQPLEHHNLLVCSVSDFYPGNIEVRWFRNGKEEETGIVSTGLVRNGDWTFQTLVMLETVPQSGEVYTCQVEHPSLTDPVTVEWKAQSTSAQNKMLSGVGGFVLGLLFLGAGLFIYFRNQKGQSGLQPTGLLS</sequence>
<reference key="1">
    <citation type="journal article" date="1983" name="Proc. Natl. Acad. Sci. U.S.A.">
        <title>Complete primary structures of the E beta chain and gene of the mouse major histocompatibility complex.</title>
        <authorList>
            <person name="Saito H."/>
            <person name="Maki R.A."/>
            <person name="Clayton L.K."/>
            <person name="Tonegawa S."/>
        </authorList>
    </citation>
    <scope>NUCLEOTIDE SEQUENCE [GENOMIC DNA]</scope>
</reference>
<reference key="2">
    <citation type="journal article" date="1984" name="Nature">
        <title>Cell type-specific enhancer element associated with a mouse MHC gene, E beta.</title>
        <authorList>
            <person name="Gillies S.D."/>
            <person name="Folsom V."/>
            <person name="Tonegawa S."/>
        </authorList>
    </citation>
    <scope>NUCLEOTIDE SEQUENCE [GENOMIC DNA] OF 1-31</scope>
</reference>
<protein>
    <recommendedName>
        <fullName>H-2 class II histocompatibility antigen, E-D beta chain</fullName>
    </recommendedName>
</protein>
<dbReference type="EMBL" id="X00777">
    <property type="protein sequence ID" value="CAA25354.1"/>
    <property type="molecule type" value="Genomic_DNA"/>
</dbReference>
<dbReference type="EMBL" id="K00123">
    <property type="status" value="NOT_ANNOTATED_CDS"/>
    <property type="molecule type" value="Genomic_DNA"/>
</dbReference>
<dbReference type="PIR" id="A02225">
    <property type="entry name" value="HLMSEB"/>
</dbReference>
<dbReference type="SMR" id="P01915"/>
<dbReference type="FunCoup" id="P01915">
    <property type="interactions" value="91"/>
</dbReference>
<dbReference type="GlyGen" id="P01915">
    <property type="glycosylation" value="1 site"/>
</dbReference>
<dbReference type="PeptideAtlas" id="P01915"/>
<dbReference type="InParanoid" id="P01915"/>
<dbReference type="Proteomes" id="UP000000589">
    <property type="component" value="Unplaced"/>
</dbReference>
<dbReference type="RNAct" id="P01915">
    <property type="molecule type" value="protein"/>
</dbReference>
<dbReference type="GO" id="GO:0031902">
    <property type="term" value="C:late endosome membrane"/>
    <property type="evidence" value="ECO:0000318"/>
    <property type="project" value="GO_Central"/>
</dbReference>
<dbReference type="GO" id="GO:0005765">
    <property type="term" value="C:lysosomal membrane"/>
    <property type="evidence" value="ECO:0000318"/>
    <property type="project" value="GO_Central"/>
</dbReference>
<dbReference type="GO" id="GO:0042613">
    <property type="term" value="C:MHC class II protein complex"/>
    <property type="evidence" value="ECO:0000318"/>
    <property type="project" value="GO_Central"/>
</dbReference>
<dbReference type="GO" id="GO:0023026">
    <property type="term" value="F:MHC class II protein complex binding"/>
    <property type="evidence" value="ECO:0000318"/>
    <property type="project" value="GO_Central"/>
</dbReference>
<dbReference type="GO" id="GO:0042605">
    <property type="term" value="F:peptide antigen binding"/>
    <property type="evidence" value="ECO:0000318"/>
    <property type="project" value="GO_Central"/>
</dbReference>
<dbReference type="GO" id="GO:0002250">
    <property type="term" value="P:adaptive immune response"/>
    <property type="evidence" value="ECO:0007669"/>
    <property type="project" value="UniProtKB-KW"/>
</dbReference>
<dbReference type="GO" id="GO:0019886">
    <property type="term" value="P:antigen processing and presentation of exogenous peptide antigen via MHC class II"/>
    <property type="evidence" value="ECO:0000318"/>
    <property type="project" value="GO_Central"/>
</dbReference>
<dbReference type="GO" id="GO:0002503">
    <property type="term" value="P:peptide antigen assembly with MHC class II protein complex"/>
    <property type="evidence" value="ECO:0000318"/>
    <property type="project" value="GO_Central"/>
</dbReference>
<dbReference type="GO" id="GO:0050778">
    <property type="term" value="P:positive regulation of immune response"/>
    <property type="evidence" value="ECO:0000318"/>
    <property type="project" value="GO_Central"/>
</dbReference>
<dbReference type="GO" id="GO:0050870">
    <property type="term" value="P:positive regulation of T cell activation"/>
    <property type="evidence" value="ECO:0000318"/>
    <property type="project" value="GO_Central"/>
</dbReference>
<dbReference type="FunFam" id="2.60.40.10:FF:000116">
    <property type="entry name" value="HLA class II histocompatibility antigen, DRB1-1 beta chain"/>
    <property type="match status" value="1"/>
</dbReference>
<dbReference type="FunFam" id="3.10.320.10:FF:000001">
    <property type="entry name" value="HLA class II histocompatibility antigen, DRB1-1 beta chain"/>
    <property type="match status" value="1"/>
</dbReference>
<dbReference type="Gene3D" id="3.10.320.10">
    <property type="entry name" value="Class II Histocompatibility Antigen, M Beta Chain, Chain B, domain 1"/>
    <property type="match status" value="1"/>
</dbReference>
<dbReference type="Gene3D" id="2.60.40.10">
    <property type="entry name" value="Immunoglobulins"/>
    <property type="match status" value="1"/>
</dbReference>
<dbReference type="InterPro" id="IPR007110">
    <property type="entry name" value="Ig-like_dom"/>
</dbReference>
<dbReference type="InterPro" id="IPR036179">
    <property type="entry name" value="Ig-like_dom_sf"/>
</dbReference>
<dbReference type="InterPro" id="IPR013783">
    <property type="entry name" value="Ig-like_fold"/>
</dbReference>
<dbReference type="InterPro" id="IPR003006">
    <property type="entry name" value="Ig/MHC_CS"/>
</dbReference>
<dbReference type="InterPro" id="IPR003597">
    <property type="entry name" value="Ig_C1-set"/>
</dbReference>
<dbReference type="InterPro" id="IPR050160">
    <property type="entry name" value="MHC/Immunoglobulin"/>
</dbReference>
<dbReference type="InterPro" id="IPR011162">
    <property type="entry name" value="MHC_I/II-like_Ag-recog"/>
</dbReference>
<dbReference type="InterPro" id="IPR014745">
    <property type="entry name" value="MHC_II_a/b_N"/>
</dbReference>
<dbReference type="InterPro" id="IPR000353">
    <property type="entry name" value="MHC_II_b_N"/>
</dbReference>
<dbReference type="PANTHER" id="PTHR19944:SF99">
    <property type="entry name" value="HLA CLASS II HISTOCOMPATIBILITY ANTIGEN, DRB1 BETA CHAIN"/>
    <property type="match status" value="1"/>
</dbReference>
<dbReference type="PANTHER" id="PTHR19944">
    <property type="entry name" value="MHC CLASS II-RELATED"/>
    <property type="match status" value="1"/>
</dbReference>
<dbReference type="Pfam" id="PF07654">
    <property type="entry name" value="C1-set"/>
    <property type="match status" value="1"/>
</dbReference>
<dbReference type="Pfam" id="PF00969">
    <property type="entry name" value="MHC_II_beta"/>
    <property type="match status" value="1"/>
</dbReference>
<dbReference type="SMART" id="SM00407">
    <property type="entry name" value="IGc1"/>
    <property type="match status" value="1"/>
</dbReference>
<dbReference type="SMART" id="SM00921">
    <property type="entry name" value="MHC_II_beta"/>
    <property type="match status" value="1"/>
</dbReference>
<dbReference type="SUPFAM" id="SSF48726">
    <property type="entry name" value="Immunoglobulin"/>
    <property type="match status" value="1"/>
</dbReference>
<dbReference type="SUPFAM" id="SSF54452">
    <property type="entry name" value="MHC antigen-recognition domain"/>
    <property type="match status" value="1"/>
</dbReference>
<dbReference type="PROSITE" id="PS50835">
    <property type="entry name" value="IG_LIKE"/>
    <property type="match status" value="1"/>
</dbReference>
<dbReference type="PROSITE" id="PS00290">
    <property type="entry name" value="IG_MHC"/>
    <property type="match status" value="1"/>
</dbReference>
<name>HB22_MOUSE</name>
<accession>P01915</accession>
<keyword id="KW-1064">Adaptive immunity</keyword>
<keyword id="KW-1015">Disulfide bond</keyword>
<keyword id="KW-0325">Glycoprotein</keyword>
<keyword id="KW-0391">Immunity</keyword>
<keyword id="KW-0472">Membrane</keyword>
<keyword id="KW-0491">MHC II</keyword>
<keyword id="KW-1185">Reference proteome</keyword>
<keyword id="KW-0732">Signal</keyword>
<keyword id="KW-0812">Transmembrane</keyword>
<keyword id="KW-1133">Transmembrane helix</keyword>